<sequence length="269" mass="28909">MTKHTLEQLAADLRRAAEQGEAIAPLRDLIGIENAEAAYAIQRINVQHDVAQGRRVVGRKVGLTHPKVQQQLGVDQPDFGTLFADMCYGDNETIPFSRVLQPRIEAEIALVLNRDLPATDITFDELYNVIEWVLPALEVVGSRIRDWSIQFVDTVADNASCGVYVIGGPAQRPAGLDLKNCAMKMTRNNEEVSSGRGSECLGHPLNAAVWLARKMASLGEPLRAGDIILTGALGPMVAVNAGDRFEAHIEGIGSVAATFSSAAPKGSLS</sequence>
<name>MHPD_ECOLU</name>
<reference key="1">
    <citation type="journal article" date="2009" name="PLoS Genet.">
        <title>Organised genome dynamics in the Escherichia coli species results in highly diverse adaptive paths.</title>
        <authorList>
            <person name="Touchon M."/>
            <person name="Hoede C."/>
            <person name="Tenaillon O."/>
            <person name="Barbe V."/>
            <person name="Baeriswyl S."/>
            <person name="Bidet P."/>
            <person name="Bingen E."/>
            <person name="Bonacorsi S."/>
            <person name="Bouchier C."/>
            <person name="Bouvet O."/>
            <person name="Calteau A."/>
            <person name="Chiapello H."/>
            <person name="Clermont O."/>
            <person name="Cruveiller S."/>
            <person name="Danchin A."/>
            <person name="Diard M."/>
            <person name="Dossat C."/>
            <person name="Karoui M.E."/>
            <person name="Frapy E."/>
            <person name="Garry L."/>
            <person name="Ghigo J.M."/>
            <person name="Gilles A.M."/>
            <person name="Johnson J."/>
            <person name="Le Bouguenec C."/>
            <person name="Lescat M."/>
            <person name="Mangenot S."/>
            <person name="Martinez-Jehanne V."/>
            <person name="Matic I."/>
            <person name="Nassif X."/>
            <person name="Oztas S."/>
            <person name="Petit M.A."/>
            <person name="Pichon C."/>
            <person name="Rouy Z."/>
            <person name="Ruf C.S."/>
            <person name="Schneider D."/>
            <person name="Tourret J."/>
            <person name="Vacherie B."/>
            <person name="Vallenet D."/>
            <person name="Medigue C."/>
            <person name="Rocha E.P.C."/>
            <person name="Denamur E."/>
        </authorList>
    </citation>
    <scope>NUCLEOTIDE SEQUENCE [LARGE SCALE GENOMIC DNA]</scope>
    <source>
        <strain>UMN026 / ExPEC</strain>
    </source>
</reference>
<feature type="chain" id="PRO_1000187025" description="2-keto-4-pentenoate hydratase">
    <location>
        <begin position="1"/>
        <end position="269"/>
    </location>
</feature>
<protein>
    <recommendedName>
        <fullName evidence="1">2-keto-4-pentenoate hydratase</fullName>
        <ecNumber evidence="1">4.2.1.80</ecNumber>
    </recommendedName>
    <alternativeName>
        <fullName evidence="1">2-hydroxypentadienoic acid hydratase</fullName>
    </alternativeName>
</protein>
<proteinExistence type="inferred from homology"/>
<dbReference type="EC" id="4.2.1.80" evidence="1"/>
<dbReference type="EMBL" id="CU928163">
    <property type="protein sequence ID" value="CAR11608.1"/>
    <property type="molecule type" value="Genomic_DNA"/>
</dbReference>
<dbReference type="RefSeq" id="WP_000160742.1">
    <property type="nucleotide sequence ID" value="NC_011751.1"/>
</dbReference>
<dbReference type="RefSeq" id="YP_002411156.1">
    <property type="nucleotide sequence ID" value="NC_011751.1"/>
</dbReference>
<dbReference type="SMR" id="B7N8Q7"/>
<dbReference type="STRING" id="585056.ECUMN_0393"/>
<dbReference type="KEGG" id="eum:ECUMN_0393"/>
<dbReference type="PATRIC" id="fig|585056.7.peg.591"/>
<dbReference type="HOGENOM" id="CLU_060136_4_1_6"/>
<dbReference type="UniPathway" id="UPA00714"/>
<dbReference type="Proteomes" id="UP000007097">
    <property type="component" value="Chromosome"/>
</dbReference>
<dbReference type="GO" id="GO:0005737">
    <property type="term" value="C:cytoplasm"/>
    <property type="evidence" value="ECO:0007669"/>
    <property type="project" value="TreeGrafter"/>
</dbReference>
<dbReference type="GO" id="GO:0008684">
    <property type="term" value="F:2-oxopent-4-enoate hydratase activity"/>
    <property type="evidence" value="ECO:0007669"/>
    <property type="project" value="UniProtKB-UniRule"/>
</dbReference>
<dbReference type="GO" id="GO:0030145">
    <property type="term" value="F:manganese ion binding"/>
    <property type="evidence" value="ECO:0007669"/>
    <property type="project" value="InterPro"/>
</dbReference>
<dbReference type="GO" id="GO:0019380">
    <property type="term" value="P:3-phenylpropionate catabolic process"/>
    <property type="evidence" value="ECO:0007669"/>
    <property type="project" value="UniProtKB-UniRule"/>
</dbReference>
<dbReference type="FunFam" id="3.90.850.10:FF:000006">
    <property type="entry name" value="2-keto-4-pentenoate hydratase"/>
    <property type="match status" value="1"/>
</dbReference>
<dbReference type="Gene3D" id="3.90.850.10">
    <property type="entry name" value="Fumarylacetoacetase-like, C-terminal domain"/>
    <property type="match status" value="1"/>
</dbReference>
<dbReference type="HAMAP" id="MF_01655">
    <property type="entry name" value="MhpD"/>
    <property type="match status" value="1"/>
</dbReference>
<dbReference type="InterPro" id="IPR011234">
    <property type="entry name" value="Fumarylacetoacetase-like_C"/>
</dbReference>
<dbReference type="InterPro" id="IPR036663">
    <property type="entry name" value="Fumarylacetoacetase_C_sf"/>
</dbReference>
<dbReference type="InterPro" id="IPR050772">
    <property type="entry name" value="Hydratase-Decarb/MhpD_sf"/>
</dbReference>
<dbReference type="InterPro" id="IPR023793">
    <property type="entry name" value="Keto_pentenoate-hydratase"/>
</dbReference>
<dbReference type="NCBIfam" id="NF008461">
    <property type="entry name" value="PRK11342.1"/>
    <property type="match status" value="1"/>
</dbReference>
<dbReference type="PANTHER" id="PTHR30143:SF0">
    <property type="entry name" value="2-KETO-4-PENTENOATE HYDRATASE"/>
    <property type="match status" value="1"/>
</dbReference>
<dbReference type="PANTHER" id="PTHR30143">
    <property type="entry name" value="ACID HYDRATASE"/>
    <property type="match status" value="1"/>
</dbReference>
<dbReference type="Pfam" id="PF01557">
    <property type="entry name" value="FAA_hydrolase"/>
    <property type="match status" value="1"/>
</dbReference>
<dbReference type="SUPFAM" id="SSF56529">
    <property type="entry name" value="FAH"/>
    <property type="match status" value="1"/>
</dbReference>
<evidence type="ECO:0000255" key="1">
    <source>
        <dbReference type="HAMAP-Rule" id="MF_01655"/>
    </source>
</evidence>
<accession>B7N8Q7</accession>
<organism>
    <name type="scientific">Escherichia coli O17:K52:H18 (strain UMN026 / ExPEC)</name>
    <dbReference type="NCBI Taxonomy" id="585056"/>
    <lineage>
        <taxon>Bacteria</taxon>
        <taxon>Pseudomonadati</taxon>
        <taxon>Pseudomonadota</taxon>
        <taxon>Gammaproteobacteria</taxon>
        <taxon>Enterobacterales</taxon>
        <taxon>Enterobacteriaceae</taxon>
        <taxon>Escherichia</taxon>
    </lineage>
</organism>
<gene>
    <name evidence="1" type="primary">mhpD</name>
    <name type="ordered locus">ECUMN_0393</name>
</gene>
<keyword id="KW-0058">Aromatic hydrocarbons catabolism</keyword>
<keyword id="KW-0456">Lyase</keyword>
<comment type="function">
    <text evidence="1">Catalyzes the conversion of 2-hydroxypentadienoic acid (enolic form of 2-oxopent-4-enoate) to 4-hydroxy-2-ketopentanoic acid.</text>
</comment>
<comment type="catalytic activity">
    <reaction evidence="1">
        <text>(S)-4-hydroxy-2-oxopentanoate = (2Z)-2-hydroxypenta-2,4-dienoate + H2O</text>
        <dbReference type="Rhea" id="RHEA:22580"/>
        <dbReference type="ChEBI" id="CHEBI:15377"/>
        <dbReference type="ChEBI" id="CHEBI:67152"/>
        <dbReference type="ChEBI" id="CHEBI:73143"/>
        <dbReference type="EC" id="4.2.1.80"/>
    </reaction>
</comment>
<comment type="cofactor">
    <cofactor evidence="1">
        <name>a divalent metal cation</name>
        <dbReference type="ChEBI" id="CHEBI:60240"/>
    </cofactor>
</comment>
<comment type="pathway">
    <text evidence="1">Aromatic compound metabolism; 3-phenylpropanoate degradation.</text>
</comment>
<comment type="similarity">
    <text evidence="1">Belongs to the hydratase/decarboxylase family. MhpD subfamily.</text>
</comment>